<keyword id="KW-0414">Isoprene biosynthesis</keyword>
<keyword id="KW-0464">Manganese</keyword>
<keyword id="KW-0479">Metal-binding</keyword>
<keyword id="KW-0521">NADP</keyword>
<keyword id="KW-0560">Oxidoreductase</keyword>
<keyword id="KW-1185">Reference proteome</keyword>
<organism>
    <name type="scientific">Campylobacter curvus (strain 525.92)</name>
    <dbReference type="NCBI Taxonomy" id="360105"/>
    <lineage>
        <taxon>Bacteria</taxon>
        <taxon>Pseudomonadati</taxon>
        <taxon>Campylobacterota</taxon>
        <taxon>Epsilonproteobacteria</taxon>
        <taxon>Campylobacterales</taxon>
        <taxon>Campylobacteraceae</taxon>
        <taxon>Campylobacter</taxon>
    </lineage>
</organism>
<proteinExistence type="inferred from homology"/>
<reference key="1">
    <citation type="submission" date="2007-07" db="EMBL/GenBank/DDBJ databases">
        <title>Genome sequence of Campylobacter curvus 525.92 isolated from human feces.</title>
        <authorList>
            <person name="Fouts D.E."/>
            <person name="Mongodin E.F."/>
            <person name="Puiu D."/>
            <person name="Sebastian Y."/>
            <person name="Miller W.G."/>
            <person name="Mandrell R.E."/>
            <person name="Lastovica A.J."/>
            <person name="Nelson K.E."/>
        </authorList>
    </citation>
    <scope>NUCLEOTIDE SEQUENCE [LARGE SCALE GENOMIC DNA]</scope>
    <source>
        <strain>525.92</strain>
    </source>
</reference>
<protein>
    <recommendedName>
        <fullName evidence="1">1-deoxy-D-xylulose 5-phosphate reductoisomerase</fullName>
        <shortName evidence="1">DXP reductoisomerase</shortName>
        <ecNumber evidence="1">1.1.1.267</ecNumber>
    </recommendedName>
    <alternativeName>
        <fullName evidence="1">1-deoxyxylulose-5-phosphate reductoisomerase</fullName>
    </alternativeName>
    <alternativeName>
        <fullName evidence="1">2-C-methyl-D-erythritol 4-phosphate synthase</fullName>
    </alternativeName>
</protein>
<comment type="function">
    <text evidence="1">Catalyzes the NADPH-dependent rearrangement and reduction of 1-deoxy-D-xylulose-5-phosphate (DXP) to 2-C-methyl-D-erythritol 4-phosphate (MEP).</text>
</comment>
<comment type="catalytic activity">
    <reaction evidence="1">
        <text>2-C-methyl-D-erythritol 4-phosphate + NADP(+) = 1-deoxy-D-xylulose 5-phosphate + NADPH + H(+)</text>
        <dbReference type="Rhea" id="RHEA:13717"/>
        <dbReference type="ChEBI" id="CHEBI:15378"/>
        <dbReference type="ChEBI" id="CHEBI:57783"/>
        <dbReference type="ChEBI" id="CHEBI:57792"/>
        <dbReference type="ChEBI" id="CHEBI:58262"/>
        <dbReference type="ChEBI" id="CHEBI:58349"/>
        <dbReference type="EC" id="1.1.1.267"/>
    </reaction>
    <physiologicalReaction direction="right-to-left" evidence="1">
        <dbReference type="Rhea" id="RHEA:13719"/>
    </physiologicalReaction>
</comment>
<comment type="cofactor">
    <cofactor evidence="1">
        <name>Mg(2+)</name>
        <dbReference type="ChEBI" id="CHEBI:18420"/>
    </cofactor>
    <cofactor evidence="1">
        <name>Mn(2+)</name>
        <dbReference type="ChEBI" id="CHEBI:29035"/>
    </cofactor>
</comment>
<comment type="pathway">
    <text evidence="1">Isoprenoid biosynthesis; isopentenyl diphosphate biosynthesis via DXP pathway; isopentenyl diphosphate from 1-deoxy-D-xylulose 5-phosphate: step 1/6.</text>
</comment>
<comment type="similarity">
    <text evidence="1">Belongs to the DXR family.</text>
</comment>
<accession>A7H0K4</accession>
<feature type="chain" id="PRO_1000020236" description="1-deoxy-D-xylulose 5-phosphate reductoisomerase">
    <location>
        <begin position="1"/>
        <end position="365"/>
    </location>
</feature>
<feature type="binding site" evidence="1">
    <location>
        <position position="7"/>
    </location>
    <ligand>
        <name>NADPH</name>
        <dbReference type="ChEBI" id="CHEBI:57783"/>
    </ligand>
</feature>
<feature type="binding site" evidence="1">
    <location>
        <position position="8"/>
    </location>
    <ligand>
        <name>NADPH</name>
        <dbReference type="ChEBI" id="CHEBI:57783"/>
    </ligand>
</feature>
<feature type="binding site" evidence="1">
    <location>
        <position position="9"/>
    </location>
    <ligand>
        <name>NADPH</name>
        <dbReference type="ChEBI" id="CHEBI:57783"/>
    </ligand>
</feature>
<feature type="binding site" evidence="1">
    <location>
        <position position="10"/>
    </location>
    <ligand>
        <name>NADPH</name>
        <dbReference type="ChEBI" id="CHEBI:57783"/>
    </ligand>
</feature>
<feature type="binding site" evidence="1">
    <location>
        <position position="31"/>
    </location>
    <ligand>
        <name>NADPH</name>
        <dbReference type="ChEBI" id="CHEBI:57783"/>
    </ligand>
</feature>
<feature type="binding site" evidence="1">
    <location>
        <position position="32"/>
    </location>
    <ligand>
        <name>NADPH</name>
        <dbReference type="ChEBI" id="CHEBI:57783"/>
    </ligand>
</feature>
<feature type="binding site" evidence="1">
    <location>
        <position position="33"/>
    </location>
    <ligand>
        <name>NADPH</name>
        <dbReference type="ChEBI" id="CHEBI:57783"/>
    </ligand>
</feature>
<feature type="binding site" evidence="1">
    <location>
        <position position="114"/>
    </location>
    <ligand>
        <name>NADPH</name>
        <dbReference type="ChEBI" id="CHEBI:57783"/>
    </ligand>
</feature>
<feature type="binding site" evidence="1">
    <location>
        <position position="115"/>
    </location>
    <ligand>
        <name>1-deoxy-D-xylulose 5-phosphate</name>
        <dbReference type="ChEBI" id="CHEBI:57792"/>
    </ligand>
</feature>
<feature type="binding site" evidence="1">
    <location>
        <position position="116"/>
    </location>
    <ligand>
        <name>NADPH</name>
        <dbReference type="ChEBI" id="CHEBI:57783"/>
    </ligand>
</feature>
<feature type="binding site" evidence="1">
    <location>
        <position position="134"/>
    </location>
    <ligand>
        <name>Mn(2+)</name>
        <dbReference type="ChEBI" id="CHEBI:29035"/>
    </ligand>
</feature>
<feature type="binding site" evidence="1">
    <location>
        <position position="135"/>
    </location>
    <ligand>
        <name>1-deoxy-D-xylulose 5-phosphate</name>
        <dbReference type="ChEBI" id="CHEBI:57792"/>
    </ligand>
</feature>
<feature type="binding site" evidence="1">
    <location>
        <position position="136"/>
    </location>
    <ligand>
        <name>1-deoxy-D-xylulose 5-phosphate</name>
        <dbReference type="ChEBI" id="CHEBI:57792"/>
    </ligand>
</feature>
<feature type="binding site" evidence="1">
    <location>
        <position position="136"/>
    </location>
    <ligand>
        <name>Mn(2+)</name>
        <dbReference type="ChEBI" id="CHEBI:29035"/>
    </ligand>
</feature>
<feature type="binding site" evidence="1">
    <location>
        <position position="158"/>
    </location>
    <ligand>
        <name>1-deoxy-D-xylulose 5-phosphate</name>
        <dbReference type="ChEBI" id="CHEBI:57792"/>
    </ligand>
</feature>
<feature type="binding site" evidence="1">
    <location>
        <position position="181"/>
    </location>
    <ligand>
        <name>1-deoxy-D-xylulose 5-phosphate</name>
        <dbReference type="ChEBI" id="CHEBI:57792"/>
    </ligand>
</feature>
<feature type="binding site" evidence="1">
    <location>
        <position position="187"/>
    </location>
    <ligand>
        <name>NADPH</name>
        <dbReference type="ChEBI" id="CHEBI:57783"/>
    </ligand>
</feature>
<feature type="binding site" evidence="1">
    <location>
        <position position="194"/>
    </location>
    <ligand>
        <name>1-deoxy-D-xylulose 5-phosphate</name>
        <dbReference type="ChEBI" id="CHEBI:57792"/>
    </ligand>
</feature>
<feature type="binding site" evidence="1">
    <location>
        <position position="199"/>
    </location>
    <ligand>
        <name>1-deoxy-D-xylulose 5-phosphate</name>
        <dbReference type="ChEBI" id="CHEBI:57792"/>
    </ligand>
</feature>
<feature type="binding site" evidence="1">
    <location>
        <position position="200"/>
    </location>
    <ligand>
        <name>1-deoxy-D-xylulose 5-phosphate</name>
        <dbReference type="ChEBI" id="CHEBI:57792"/>
    </ligand>
</feature>
<feature type="binding site" evidence="1">
    <location>
        <position position="203"/>
    </location>
    <ligand>
        <name>1-deoxy-D-xylulose 5-phosphate</name>
        <dbReference type="ChEBI" id="CHEBI:57792"/>
    </ligand>
</feature>
<feature type="binding site" evidence="1">
    <location>
        <position position="203"/>
    </location>
    <ligand>
        <name>Mn(2+)</name>
        <dbReference type="ChEBI" id="CHEBI:29035"/>
    </ligand>
</feature>
<evidence type="ECO:0000255" key="1">
    <source>
        <dbReference type="HAMAP-Rule" id="MF_00183"/>
    </source>
</evidence>
<gene>
    <name evidence="1" type="primary">dxr</name>
    <name type="ordered locus">Ccur92_16920</name>
    <name type="ORF">CCV52592_0594</name>
</gene>
<sequence length="365" mass="39640">MVILGSTGSIGTNTLEICSRHGVSVEALSCAKNIALLNEQIARFRPKFVCVADESLASEVKILKKSQIFVGAGGLLEMLEACHSQKVVNAIVGFAGLAPSLKTQELGKSLALANKESLVAGGKFLDTAKISPIDSEHFGLKFLLQNRTAPNRLIITASGGAFYRTPMKNLAKVTPSDALKHPNWSMGAKITIDSATMANKLFEVMEAFWLYGTSRIDALIEPTSMVHALVEFMDGSCTAHISRADMKLAIAHAVLENVSENVVAHADLLALKDIKFHKINLKKYPIFSLKEQVLERADLGVVINAANEVGVFAFLKGECRFLDISRIVLAAAKRFADVKIETKDEIFAIDAEVRNFTKRGLNAKI</sequence>
<name>DXR_CAMC5</name>
<dbReference type="EC" id="1.1.1.267" evidence="1"/>
<dbReference type="EMBL" id="CP000767">
    <property type="protein sequence ID" value="EAU01416.2"/>
    <property type="molecule type" value="Genomic_DNA"/>
</dbReference>
<dbReference type="RefSeq" id="WP_011992749.1">
    <property type="nucleotide sequence ID" value="NC_009715.2"/>
</dbReference>
<dbReference type="SMR" id="A7H0K4"/>
<dbReference type="STRING" id="360105.CCV52592_0594"/>
<dbReference type="KEGG" id="ccv:CCV52592_0594"/>
<dbReference type="HOGENOM" id="CLU_035714_4_0_7"/>
<dbReference type="OrthoDB" id="9806546at2"/>
<dbReference type="UniPathway" id="UPA00056">
    <property type="reaction ID" value="UER00092"/>
</dbReference>
<dbReference type="Proteomes" id="UP000006380">
    <property type="component" value="Chromosome"/>
</dbReference>
<dbReference type="GO" id="GO:0030604">
    <property type="term" value="F:1-deoxy-D-xylulose-5-phosphate reductoisomerase activity"/>
    <property type="evidence" value="ECO:0007669"/>
    <property type="project" value="UniProtKB-UniRule"/>
</dbReference>
<dbReference type="GO" id="GO:0030145">
    <property type="term" value="F:manganese ion binding"/>
    <property type="evidence" value="ECO:0007669"/>
    <property type="project" value="TreeGrafter"/>
</dbReference>
<dbReference type="GO" id="GO:0070402">
    <property type="term" value="F:NADPH binding"/>
    <property type="evidence" value="ECO:0007669"/>
    <property type="project" value="InterPro"/>
</dbReference>
<dbReference type="GO" id="GO:0051484">
    <property type="term" value="P:isopentenyl diphosphate biosynthetic process, methylerythritol 4-phosphate pathway involved in terpenoid biosynthetic process"/>
    <property type="evidence" value="ECO:0007669"/>
    <property type="project" value="TreeGrafter"/>
</dbReference>
<dbReference type="Gene3D" id="1.10.1740.10">
    <property type="match status" value="1"/>
</dbReference>
<dbReference type="Gene3D" id="3.40.50.720">
    <property type="entry name" value="NAD(P)-binding Rossmann-like Domain"/>
    <property type="match status" value="1"/>
</dbReference>
<dbReference type="HAMAP" id="MF_00183">
    <property type="entry name" value="DXP_reductoisom"/>
    <property type="match status" value="1"/>
</dbReference>
<dbReference type="InterPro" id="IPR003821">
    <property type="entry name" value="DXP_reductoisomerase"/>
</dbReference>
<dbReference type="InterPro" id="IPR013644">
    <property type="entry name" value="DXP_reductoisomerase_C"/>
</dbReference>
<dbReference type="InterPro" id="IPR013512">
    <property type="entry name" value="DXP_reductoisomerase_N"/>
</dbReference>
<dbReference type="InterPro" id="IPR026877">
    <property type="entry name" value="DXPR_C"/>
</dbReference>
<dbReference type="InterPro" id="IPR036169">
    <property type="entry name" value="DXPR_C_sf"/>
</dbReference>
<dbReference type="InterPro" id="IPR036291">
    <property type="entry name" value="NAD(P)-bd_dom_sf"/>
</dbReference>
<dbReference type="NCBIfam" id="TIGR00243">
    <property type="entry name" value="Dxr"/>
    <property type="match status" value="1"/>
</dbReference>
<dbReference type="PANTHER" id="PTHR30525">
    <property type="entry name" value="1-DEOXY-D-XYLULOSE 5-PHOSPHATE REDUCTOISOMERASE"/>
    <property type="match status" value="1"/>
</dbReference>
<dbReference type="PANTHER" id="PTHR30525:SF0">
    <property type="entry name" value="1-DEOXY-D-XYLULOSE 5-PHOSPHATE REDUCTOISOMERASE, CHLOROPLASTIC"/>
    <property type="match status" value="1"/>
</dbReference>
<dbReference type="Pfam" id="PF08436">
    <property type="entry name" value="DXP_redisom_C"/>
    <property type="match status" value="1"/>
</dbReference>
<dbReference type="Pfam" id="PF02670">
    <property type="entry name" value="DXP_reductoisom"/>
    <property type="match status" value="1"/>
</dbReference>
<dbReference type="Pfam" id="PF13288">
    <property type="entry name" value="DXPR_C"/>
    <property type="match status" value="1"/>
</dbReference>
<dbReference type="PIRSF" id="PIRSF006205">
    <property type="entry name" value="Dxp_reductismrs"/>
    <property type="match status" value="1"/>
</dbReference>
<dbReference type="SUPFAM" id="SSF69055">
    <property type="entry name" value="1-deoxy-D-xylulose-5-phosphate reductoisomerase, C-terminal domain"/>
    <property type="match status" value="1"/>
</dbReference>
<dbReference type="SUPFAM" id="SSF55347">
    <property type="entry name" value="Glyceraldehyde-3-phosphate dehydrogenase-like, C-terminal domain"/>
    <property type="match status" value="1"/>
</dbReference>
<dbReference type="SUPFAM" id="SSF51735">
    <property type="entry name" value="NAD(P)-binding Rossmann-fold domains"/>
    <property type="match status" value="1"/>
</dbReference>